<sequence length="226" mass="25495">MSDSENEGPPQLSSYALAALQEFYAEQQHHHSDLCGDDKYNIGIIEENWQLSQFWYSPETATCLAEDAVAAAGEGGRIACVSAPSVYQKLRERHRDDVSVCIFEYDRRFAIYGEDFVYYDYKNPVDLPERIATHSFDIVVADPPYLSEECLRKMSETIKLLTRGKILLCTGAVMEDAAAKLLGVKMCKFIPEHTRTLGNEFRCFVNYNSGLDCNLSVQLPVQEGPK</sequence>
<dbReference type="EC" id="2.1.1.-" evidence="2"/>
<dbReference type="EMBL" id="BC118400">
    <property type="protein sequence ID" value="AAI18401.1"/>
    <property type="molecule type" value="mRNA"/>
</dbReference>
<dbReference type="RefSeq" id="NP_001073818.1">
    <property type="nucleotide sequence ID" value="NM_001080349.2"/>
</dbReference>
<dbReference type="RefSeq" id="XP_005213867.1">
    <property type="nucleotide sequence ID" value="XM_005213810.5"/>
</dbReference>
<dbReference type="RefSeq" id="XP_005213868.1">
    <property type="nucleotide sequence ID" value="XM_005213811.3"/>
</dbReference>
<dbReference type="RefSeq" id="XP_005213869.1">
    <property type="nucleotide sequence ID" value="XM_005213812.5"/>
</dbReference>
<dbReference type="RefSeq" id="XP_059748135.1">
    <property type="nucleotide sequence ID" value="XM_059892152.1"/>
</dbReference>
<dbReference type="FunCoup" id="Q17QF2">
    <property type="interactions" value="1263"/>
</dbReference>
<dbReference type="STRING" id="9913.ENSBTAP00000069559"/>
<dbReference type="PaxDb" id="9913-ENSBTAP00000010916"/>
<dbReference type="GeneID" id="783374"/>
<dbReference type="KEGG" id="bta:783374"/>
<dbReference type="CTD" id="221143"/>
<dbReference type="eggNOG" id="KOG3350">
    <property type="taxonomic scope" value="Eukaryota"/>
</dbReference>
<dbReference type="HOGENOM" id="CLU_074410_2_1_1"/>
<dbReference type="InParanoid" id="Q17QF2"/>
<dbReference type="OrthoDB" id="206354at2759"/>
<dbReference type="TreeFam" id="TF106153"/>
<dbReference type="Proteomes" id="UP000009136">
    <property type="component" value="Unplaced"/>
</dbReference>
<dbReference type="GO" id="GO:0005737">
    <property type="term" value="C:cytoplasm"/>
    <property type="evidence" value="ECO:0007669"/>
    <property type="project" value="UniProtKB-SubCell"/>
</dbReference>
<dbReference type="GO" id="GO:0008168">
    <property type="term" value="F:methyltransferase activity"/>
    <property type="evidence" value="ECO:0000250"/>
    <property type="project" value="UniProtKB"/>
</dbReference>
<dbReference type="GO" id="GO:0003676">
    <property type="term" value="F:nucleic acid binding"/>
    <property type="evidence" value="ECO:0007669"/>
    <property type="project" value="InterPro"/>
</dbReference>
<dbReference type="GO" id="GO:0016279">
    <property type="term" value="F:protein-lysine N-methyltransferase activity"/>
    <property type="evidence" value="ECO:0000250"/>
    <property type="project" value="UniProtKB"/>
</dbReference>
<dbReference type="GO" id="GO:0018022">
    <property type="term" value="P:peptidyl-lysine methylation"/>
    <property type="evidence" value="ECO:0000250"/>
    <property type="project" value="UniProtKB"/>
</dbReference>
<dbReference type="HAMAP" id="MF_03187">
    <property type="entry name" value="Methyltr_EFM5"/>
    <property type="match status" value="1"/>
</dbReference>
<dbReference type="InterPro" id="IPR002052">
    <property type="entry name" value="DNA_methylase_N6_adenine_CS"/>
</dbReference>
<dbReference type="InterPro" id="IPR019369">
    <property type="entry name" value="Efm5/EEF1AKMT1"/>
</dbReference>
<dbReference type="InterPro" id="IPR041370">
    <property type="entry name" value="Mlase_EEF1AKMT1/ZCCHC4"/>
</dbReference>
<dbReference type="InterPro" id="IPR029063">
    <property type="entry name" value="SAM-dependent_MTases_sf"/>
</dbReference>
<dbReference type="PANTHER" id="PTHR13200">
    <property type="entry name" value="EEF1A LYSINE METHYLTRANSFERASE 1"/>
    <property type="match status" value="1"/>
</dbReference>
<dbReference type="PANTHER" id="PTHR13200:SF0">
    <property type="entry name" value="EEF1A LYSINE METHYLTRANSFERASE 1"/>
    <property type="match status" value="1"/>
</dbReference>
<dbReference type="Pfam" id="PF10237">
    <property type="entry name" value="N6-adenineMlase"/>
    <property type="match status" value="1"/>
</dbReference>
<dbReference type="SUPFAM" id="SSF53335">
    <property type="entry name" value="S-adenosyl-L-methionine-dependent methyltransferases"/>
    <property type="match status" value="1"/>
</dbReference>
<feature type="initiator methionine" description="Removed" evidence="1">
    <location>
        <position position="1"/>
    </location>
</feature>
<feature type="chain" id="PRO_0000311293" description="EEF1A lysine methyltransferase 1">
    <location>
        <begin position="2"/>
        <end position="226"/>
    </location>
</feature>
<feature type="modified residue" description="N-acetylserine" evidence="1">
    <location>
        <position position="2"/>
    </location>
</feature>
<feature type="modified residue" description="Phosphoserine" evidence="1">
    <location>
        <position position="2"/>
    </location>
</feature>
<keyword id="KW-0007">Acetylation</keyword>
<keyword id="KW-0963">Cytoplasm</keyword>
<keyword id="KW-0489">Methyltransferase</keyword>
<keyword id="KW-0597">Phosphoprotein</keyword>
<keyword id="KW-1185">Reference proteome</keyword>
<keyword id="KW-0808">Transferase</keyword>
<comment type="function">
    <text evidence="2">Protein-lysine methyltransferase that selectively catalyzes the trimethylation of EEF1A at 'Lys-79'.</text>
</comment>
<comment type="catalytic activity">
    <reaction evidence="1">
        <text>L-lysyl-[protein] + 3 S-adenosyl-L-methionine = N(6),N(6),N(6)-trimethyl-L-lysyl-[protein] + 3 S-adenosyl-L-homocysteine + 3 H(+)</text>
        <dbReference type="Rhea" id="RHEA:54192"/>
        <dbReference type="Rhea" id="RHEA-COMP:9752"/>
        <dbReference type="Rhea" id="RHEA-COMP:13826"/>
        <dbReference type="ChEBI" id="CHEBI:15378"/>
        <dbReference type="ChEBI" id="CHEBI:29969"/>
        <dbReference type="ChEBI" id="CHEBI:57856"/>
        <dbReference type="ChEBI" id="CHEBI:59789"/>
        <dbReference type="ChEBI" id="CHEBI:61961"/>
    </reaction>
    <physiologicalReaction direction="left-to-right" evidence="1">
        <dbReference type="Rhea" id="RHEA:54193"/>
    </physiologicalReaction>
</comment>
<comment type="subcellular location">
    <subcellularLocation>
        <location evidence="2">Cytoplasm</location>
    </subcellularLocation>
</comment>
<comment type="similarity">
    <text evidence="2">Belongs to the class I-like SAM-binding methyltransferase superfamily. EFM5 family.</text>
</comment>
<comment type="caution">
    <text evidence="2">Was originally thought to be an N(6)-adenine-specific DNA methyltransferase based on primary sequence and predicted secondary structure.</text>
</comment>
<gene>
    <name evidence="2" type="primary">EEF1AKMT1</name>
    <name evidence="2" type="synonym">N6AMT2</name>
</gene>
<organism>
    <name type="scientific">Bos taurus</name>
    <name type="common">Bovine</name>
    <dbReference type="NCBI Taxonomy" id="9913"/>
    <lineage>
        <taxon>Eukaryota</taxon>
        <taxon>Metazoa</taxon>
        <taxon>Chordata</taxon>
        <taxon>Craniata</taxon>
        <taxon>Vertebrata</taxon>
        <taxon>Euteleostomi</taxon>
        <taxon>Mammalia</taxon>
        <taxon>Eutheria</taxon>
        <taxon>Laurasiatheria</taxon>
        <taxon>Artiodactyla</taxon>
        <taxon>Ruminantia</taxon>
        <taxon>Pecora</taxon>
        <taxon>Bovidae</taxon>
        <taxon>Bovinae</taxon>
        <taxon>Bos</taxon>
    </lineage>
</organism>
<proteinExistence type="evidence at transcript level"/>
<accession>Q17QF2</accession>
<protein>
    <recommendedName>
        <fullName evidence="2">EEF1A lysine methyltransferase 1</fullName>
        <ecNumber evidence="2">2.1.1.-</ecNumber>
    </recommendedName>
    <alternativeName>
        <fullName evidence="2">N(6)-adenine-specific DNA methyltransferase 2</fullName>
    </alternativeName>
    <alternativeName>
        <fullName evidence="2">Protein-lysine N-methyltransferase N6AMT2</fullName>
    </alternativeName>
</protein>
<name>EFMT1_BOVIN</name>
<evidence type="ECO:0000250" key="1">
    <source>
        <dbReference type="UniProtKB" id="Q8WVE0"/>
    </source>
</evidence>
<evidence type="ECO:0000255" key="2">
    <source>
        <dbReference type="HAMAP-Rule" id="MF_03187"/>
    </source>
</evidence>
<reference key="1">
    <citation type="submission" date="2006-06" db="EMBL/GenBank/DDBJ databases">
        <authorList>
            <consortium name="NIH - Mammalian Gene Collection (MGC) project"/>
        </authorList>
    </citation>
    <scope>NUCLEOTIDE SEQUENCE [LARGE SCALE MRNA]</scope>
    <source>
        <strain>Hereford</strain>
        <tissue>Fetal liver</tissue>
    </source>
</reference>